<proteinExistence type="evidence at transcript level"/>
<name>BICL2_XENTR</name>
<organism>
    <name type="scientific">Xenopus tropicalis</name>
    <name type="common">Western clawed frog</name>
    <name type="synonym">Silurana tropicalis</name>
    <dbReference type="NCBI Taxonomy" id="8364"/>
    <lineage>
        <taxon>Eukaryota</taxon>
        <taxon>Metazoa</taxon>
        <taxon>Chordata</taxon>
        <taxon>Craniata</taxon>
        <taxon>Vertebrata</taxon>
        <taxon>Euteleostomi</taxon>
        <taxon>Amphibia</taxon>
        <taxon>Batrachia</taxon>
        <taxon>Anura</taxon>
        <taxon>Pipoidea</taxon>
        <taxon>Pipidae</taxon>
        <taxon>Xenopodinae</taxon>
        <taxon>Xenopus</taxon>
        <taxon>Silurana</taxon>
    </lineage>
</organism>
<evidence type="ECO:0000255" key="1"/>
<evidence type="ECO:0000256" key="2">
    <source>
        <dbReference type="SAM" id="MobiDB-lite"/>
    </source>
</evidence>
<evidence type="ECO:0000305" key="3"/>
<sequence>MGWNGGLTSPSMEEHFYPFLMERSPSYMGEDEEEHGDEDLSLVLERKDKDLLLAAELGKALLERNDQLMKAKDALEEELRETLEMIEQEKHNMRLKMEVQESEWRAQVADLESDLAEARLQMQQLLSEQRECGRESASAVQELSEQNQRLVEQLAQASQVEQAITLEMKSLKEENRDLTISRGQFAPCLQSLRSENALLLEKKKEMESQTKQLQEENDNVQNQLISAKEGVFQLQRQKEDAKSQVLQLELEAQKLRDSQRTLQLQLKELQDELHMRDSQFSMRGTHSSLHSEIQQSTAVQNHEKGRNSAETQSITSGYMDTYLTEREGDLLRENEEQTVRLQDQVTMQHIEITDLRKEVQRLKDLLQQNNADSTVKQAVLDRDEALMKKAELEQELARCQIEKESLNLQLLSTIQQKVMLSQELEAWQDDMQIVINQQLQSQKQQETQKPPESPQNSFLRRDSKRGKILSFFKNI</sequence>
<protein>
    <recommendedName>
        <fullName>BICD family-like cargo adapter 2</fullName>
    </recommendedName>
    <alternativeName>
        <fullName>Bicaudal D-related protein 2</fullName>
        <shortName>BICD-related protein 2</shortName>
        <shortName>BICDR-2</shortName>
    </alternativeName>
    <alternativeName>
        <fullName>Coiled-coil domain-containing protein 64B</fullName>
    </alternativeName>
</protein>
<accession>Q6DIX6</accession>
<comment type="similarity">
    <text evidence="3">Belongs to the BICDR family.</text>
</comment>
<reference key="1">
    <citation type="submission" date="2004-06" db="EMBL/GenBank/DDBJ databases">
        <authorList>
            <consortium name="NIH - Xenopus Gene Collection (XGC) project"/>
        </authorList>
    </citation>
    <scope>NUCLEOTIDE SEQUENCE [LARGE SCALE MRNA]</scope>
</reference>
<feature type="chain" id="PRO_0000302864" description="BICD family-like cargo adapter 2">
    <location>
        <begin position="1"/>
        <end position="475"/>
    </location>
</feature>
<feature type="region of interest" description="Disordered" evidence="2">
    <location>
        <begin position="286"/>
        <end position="318"/>
    </location>
</feature>
<feature type="region of interest" description="Disordered" evidence="2">
    <location>
        <begin position="440"/>
        <end position="459"/>
    </location>
</feature>
<feature type="coiled-coil region" evidence="1">
    <location>
        <begin position="56"/>
        <end position="275"/>
    </location>
</feature>
<feature type="coiled-coil region" evidence="1">
    <location>
        <begin position="340"/>
        <end position="413"/>
    </location>
</feature>
<feature type="compositionally biased region" description="Polar residues" evidence="2">
    <location>
        <begin position="286"/>
        <end position="300"/>
    </location>
</feature>
<feature type="compositionally biased region" description="Polar residues" evidence="2">
    <location>
        <begin position="308"/>
        <end position="318"/>
    </location>
</feature>
<feature type="compositionally biased region" description="Low complexity" evidence="2">
    <location>
        <begin position="440"/>
        <end position="450"/>
    </location>
</feature>
<gene>
    <name type="primary">bicdl2</name>
    <name type="synonym">bicdr2</name>
    <name type="synonym">ccdc64b</name>
</gene>
<keyword id="KW-0175">Coiled coil</keyword>
<keyword id="KW-1185">Reference proteome</keyword>
<dbReference type="EMBL" id="BC075409">
    <property type="protein sequence ID" value="AAH75409.1"/>
    <property type="molecule type" value="mRNA"/>
</dbReference>
<dbReference type="RefSeq" id="NP_001004934.1">
    <property type="nucleotide sequence ID" value="NM_001004934.1"/>
</dbReference>
<dbReference type="SMR" id="Q6DIX6"/>
<dbReference type="FunCoup" id="Q6DIX6">
    <property type="interactions" value="12"/>
</dbReference>
<dbReference type="STRING" id="8364.ENSXETP00000032373"/>
<dbReference type="PaxDb" id="8364-ENSXETP00000024837"/>
<dbReference type="DNASU" id="448330"/>
<dbReference type="GeneID" id="448330"/>
<dbReference type="KEGG" id="xtr:448330"/>
<dbReference type="AGR" id="Xenbase:XB-GENE-5747721"/>
<dbReference type="CTD" id="146439"/>
<dbReference type="Xenbase" id="XB-GENE-5747721">
    <property type="gene designation" value="bicdl2"/>
</dbReference>
<dbReference type="eggNOG" id="ENOG502QRVU">
    <property type="taxonomic scope" value="Eukaryota"/>
</dbReference>
<dbReference type="HOGENOM" id="CLU_029068_2_1_1"/>
<dbReference type="InParanoid" id="Q6DIX6"/>
<dbReference type="OrthoDB" id="9451547at2759"/>
<dbReference type="TreeFam" id="TF326671"/>
<dbReference type="Proteomes" id="UP000008143">
    <property type="component" value="Chromosome 9"/>
</dbReference>
<dbReference type="InterPro" id="IPR051149">
    <property type="entry name" value="Spindly/BICDR_Dynein_Adapter"/>
</dbReference>
<dbReference type="PANTHER" id="PTHR32123">
    <property type="entry name" value="BICD FAMILY-LIKE CARGO ADAPTER"/>
    <property type="match status" value="1"/>
</dbReference>
<dbReference type="PANTHER" id="PTHR32123:SF11">
    <property type="entry name" value="BICD FAMILY-LIKE CARGO ADAPTER 2-RELATED"/>
    <property type="match status" value="1"/>
</dbReference>